<sequence>MTRRYWNINLKEMIEAGVHFGHGIKKWNPKMAPYISAKRKGTHIINLARTARFLSEACDLVFDAASQGKSFLIVGTKKRATDLVASAAIRARCHYVNKKWFSGMLTNWSITKTRLSQFRDLRAEEKMGKFHHLPKRDVAILKRKLSTLQRYLGGIKYMTRLPDIVIVLDQQKEYIALRECAILGIPTISLVDTNCDPDLANISIPANDDTMTSIRLILNKLVFSICEGRSLYIRNR</sequence>
<dbReference type="EMBL" id="EF115541">
    <property type="protein sequence ID" value="ABK79406.1"/>
    <property type="molecule type" value="Genomic_DNA"/>
</dbReference>
<dbReference type="RefSeq" id="YP_874646.1">
    <property type="nucleotide sequence ID" value="NC_008590.1"/>
</dbReference>
<dbReference type="SMR" id="A1E9I4"/>
<dbReference type="GeneID" id="4525123"/>
<dbReference type="OMA" id="MSVTMRQ"/>
<dbReference type="GO" id="GO:0009507">
    <property type="term" value="C:chloroplast"/>
    <property type="evidence" value="ECO:0007669"/>
    <property type="project" value="UniProtKB-SubCell"/>
</dbReference>
<dbReference type="GO" id="GO:0005763">
    <property type="term" value="C:mitochondrial small ribosomal subunit"/>
    <property type="evidence" value="ECO:0007669"/>
    <property type="project" value="TreeGrafter"/>
</dbReference>
<dbReference type="GO" id="GO:0003735">
    <property type="term" value="F:structural constituent of ribosome"/>
    <property type="evidence" value="ECO:0007669"/>
    <property type="project" value="InterPro"/>
</dbReference>
<dbReference type="GO" id="GO:0006412">
    <property type="term" value="P:translation"/>
    <property type="evidence" value="ECO:0007669"/>
    <property type="project" value="UniProtKB-UniRule"/>
</dbReference>
<dbReference type="CDD" id="cd01425">
    <property type="entry name" value="RPS2"/>
    <property type="match status" value="1"/>
</dbReference>
<dbReference type="FunFam" id="1.10.287.610:FF:000001">
    <property type="entry name" value="30S ribosomal protein S2"/>
    <property type="match status" value="1"/>
</dbReference>
<dbReference type="Gene3D" id="3.40.50.10490">
    <property type="entry name" value="Glucose-6-phosphate isomerase like protein, domain 1"/>
    <property type="match status" value="1"/>
</dbReference>
<dbReference type="Gene3D" id="1.10.287.610">
    <property type="entry name" value="Helix hairpin bin"/>
    <property type="match status" value="1"/>
</dbReference>
<dbReference type="HAMAP" id="MF_00291_B">
    <property type="entry name" value="Ribosomal_uS2_B"/>
    <property type="match status" value="1"/>
</dbReference>
<dbReference type="InterPro" id="IPR001865">
    <property type="entry name" value="Ribosomal_uS2"/>
</dbReference>
<dbReference type="InterPro" id="IPR005706">
    <property type="entry name" value="Ribosomal_uS2_bac/mit/plastid"/>
</dbReference>
<dbReference type="InterPro" id="IPR018130">
    <property type="entry name" value="Ribosomal_uS2_CS"/>
</dbReference>
<dbReference type="InterPro" id="IPR023591">
    <property type="entry name" value="Ribosomal_uS2_flav_dom_sf"/>
</dbReference>
<dbReference type="NCBIfam" id="TIGR01011">
    <property type="entry name" value="rpsB_bact"/>
    <property type="match status" value="1"/>
</dbReference>
<dbReference type="PANTHER" id="PTHR12534">
    <property type="entry name" value="30S RIBOSOMAL PROTEIN S2 PROKARYOTIC AND ORGANELLAR"/>
    <property type="match status" value="1"/>
</dbReference>
<dbReference type="PANTHER" id="PTHR12534:SF0">
    <property type="entry name" value="SMALL RIBOSOMAL SUBUNIT PROTEIN US2M"/>
    <property type="match status" value="1"/>
</dbReference>
<dbReference type="Pfam" id="PF00318">
    <property type="entry name" value="Ribosomal_S2"/>
    <property type="match status" value="1"/>
</dbReference>
<dbReference type="PRINTS" id="PR00395">
    <property type="entry name" value="RIBOSOMALS2"/>
</dbReference>
<dbReference type="SUPFAM" id="SSF52313">
    <property type="entry name" value="Ribosomal protein S2"/>
    <property type="match status" value="1"/>
</dbReference>
<dbReference type="PROSITE" id="PS00962">
    <property type="entry name" value="RIBOSOMAL_S2_1"/>
    <property type="match status" value="1"/>
</dbReference>
<dbReference type="PROSITE" id="PS00963">
    <property type="entry name" value="RIBOSOMAL_S2_2"/>
    <property type="match status" value="1"/>
</dbReference>
<accession>A1E9I4</accession>
<organism>
    <name type="scientific">Hordeum vulgare</name>
    <name type="common">Barley</name>
    <dbReference type="NCBI Taxonomy" id="4513"/>
    <lineage>
        <taxon>Eukaryota</taxon>
        <taxon>Viridiplantae</taxon>
        <taxon>Streptophyta</taxon>
        <taxon>Embryophyta</taxon>
        <taxon>Tracheophyta</taxon>
        <taxon>Spermatophyta</taxon>
        <taxon>Magnoliopsida</taxon>
        <taxon>Liliopsida</taxon>
        <taxon>Poales</taxon>
        <taxon>Poaceae</taxon>
        <taxon>BOP clade</taxon>
        <taxon>Pooideae</taxon>
        <taxon>Triticodae</taxon>
        <taxon>Triticeae</taxon>
        <taxon>Hordeinae</taxon>
        <taxon>Hordeum</taxon>
    </lineage>
</organism>
<keyword id="KW-0150">Chloroplast</keyword>
<keyword id="KW-0934">Plastid</keyword>
<keyword id="KW-0687">Ribonucleoprotein</keyword>
<keyword id="KW-0689">Ribosomal protein</keyword>
<name>RR2_HORVU</name>
<proteinExistence type="inferred from homology"/>
<comment type="subcellular location">
    <subcellularLocation>
        <location>Plastid</location>
        <location>Chloroplast</location>
    </subcellularLocation>
</comment>
<comment type="similarity">
    <text evidence="1">Belongs to the universal ribosomal protein uS2 family.</text>
</comment>
<geneLocation type="chloroplast"/>
<evidence type="ECO:0000305" key="1"/>
<feature type="chain" id="PRO_0000352119" description="Small ribosomal subunit protein uS2c">
    <location>
        <begin position="1"/>
        <end position="236"/>
    </location>
</feature>
<gene>
    <name type="primary">rps2</name>
</gene>
<protein>
    <recommendedName>
        <fullName evidence="1">Small ribosomal subunit protein uS2c</fullName>
    </recommendedName>
    <alternativeName>
        <fullName>30S ribosomal protein S2, chloroplastic</fullName>
    </alternativeName>
</protein>
<reference key="1">
    <citation type="journal article" date="2007" name="Theor. Appl. Genet.">
        <title>Complete chloroplast genome sequences of Hordeum vulgare, Sorghum bicolor and Agrostis stolonifera, and comparative analyses with other grass genomes.</title>
        <authorList>
            <person name="Saski C."/>
            <person name="Lee S.-B."/>
            <person name="Fjellheim S."/>
            <person name="Guda C."/>
            <person name="Jansen R.K."/>
            <person name="Luo H."/>
            <person name="Tomkins J."/>
            <person name="Rognli O.A."/>
            <person name="Daniell H."/>
            <person name="Clarke J.L."/>
        </authorList>
    </citation>
    <scope>NUCLEOTIDE SEQUENCE [LARGE SCALE GENOMIC DNA]</scope>
    <source>
        <strain>cv. Morex</strain>
    </source>
</reference>